<accession>P0A718</accession>
<accession>P08330</accession>
<accession>P76828</accession>
<accession>P78058</accession>
<comment type="function">
    <text evidence="2">Involved in the biosynthesis of the central metabolite phospho-alpha-D-ribosyl-1-pyrophosphate (PRPP) via the transfer of pyrophosphoryl group from ATP to 1-hydroxyl of ribose-5-phosphate (Rib-5-P).</text>
</comment>
<comment type="catalytic activity">
    <reaction evidence="2">
        <text>D-ribose 5-phosphate + ATP = 5-phospho-alpha-D-ribose 1-diphosphate + AMP + H(+)</text>
        <dbReference type="Rhea" id="RHEA:15609"/>
        <dbReference type="ChEBI" id="CHEBI:15378"/>
        <dbReference type="ChEBI" id="CHEBI:30616"/>
        <dbReference type="ChEBI" id="CHEBI:58017"/>
        <dbReference type="ChEBI" id="CHEBI:78346"/>
        <dbReference type="ChEBI" id="CHEBI:456215"/>
        <dbReference type="EC" id="2.7.6.1"/>
    </reaction>
</comment>
<comment type="cofactor">
    <cofactor evidence="2">
        <name>Mg(2+)</name>
        <dbReference type="ChEBI" id="CHEBI:18420"/>
    </cofactor>
    <text evidence="2">Binds 2 Mg(2+) ions per subunit.</text>
</comment>
<comment type="pathway">
    <text evidence="2">Metabolic intermediate biosynthesis; 5-phospho-alpha-D-ribose 1-diphosphate biosynthesis; 5-phospho-alpha-D-ribose 1-diphosphate from D-ribose 5-phosphate (route I): step 1/1.</text>
</comment>
<comment type="subunit">
    <text evidence="2">Homohexamer.</text>
</comment>
<comment type="subcellular location">
    <subcellularLocation>
        <location evidence="2">Cytoplasm</location>
    </subcellularLocation>
</comment>
<comment type="similarity">
    <text evidence="2">Belongs to the ribose-phosphate pyrophosphokinase family. Class I subfamily.</text>
</comment>
<comment type="sequence caution" evidence="3">
    <conflict type="erroneous initiation">
        <sequence resource="EMBL-CDS" id="AAN80130"/>
    </conflict>
    <text>Extended N-terminus.</text>
</comment>
<organism>
    <name type="scientific">Escherichia coli O6:H1 (strain CFT073 / ATCC 700928 / UPEC)</name>
    <dbReference type="NCBI Taxonomy" id="199310"/>
    <lineage>
        <taxon>Bacteria</taxon>
        <taxon>Pseudomonadati</taxon>
        <taxon>Pseudomonadota</taxon>
        <taxon>Gammaproteobacteria</taxon>
        <taxon>Enterobacterales</taxon>
        <taxon>Enterobacteriaceae</taxon>
        <taxon>Escherichia</taxon>
    </lineage>
</organism>
<feature type="initiator methionine" description="Removed" evidence="1">
    <location>
        <position position="1"/>
    </location>
</feature>
<feature type="chain" id="PRO_0000141135" description="Ribose-phosphate pyrophosphokinase">
    <location>
        <begin position="2"/>
        <end position="315"/>
    </location>
</feature>
<feature type="active site" evidence="2">
    <location>
        <position position="194"/>
    </location>
</feature>
<feature type="binding site" evidence="2">
    <location>
        <begin position="37"/>
        <end position="39"/>
    </location>
    <ligand>
        <name>ATP</name>
        <dbReference type="ChEBI" id="CHEBI:30616"/>
    </ligand>
</feature>
<feature type="binding site" evidence="2">
    <location>
        <begin position="96"/>
        <end position="97"/>
    </location>
    <ligand>
        <name>ATP</name>
        <dbReference type="ChEBI" id="CHEBI:30616"/>
    </ligand>
</feature>
<feature type="binding site" evidence="2">
    <location>
        <position position="131"/>
    </location>
    <ligand>
        <name>Mg(2+)</name>
        <dbReference type="ChEBI" id="CHEBI:18420"/>
        <label>1</label>
    </ligand>
</feature>
<feature type="binding site" evidence="2">
    <location>
        <position position="170"/>
    </location>
    <ligand>
        <name>Mg(2+)</name>
        <dbReference type="ChEBI" id="CHEBI:18420"/>
        <label>2</label>
    </ligand>
</feature>
<feature type="binding site" evidence="2">
    <location>
        <position position="196"/>
    </location>
    <ligand>
        <name>D-ribose 5-phosphate</name>
        <dbReference type="ChEBI" id="CHEBI:78346"/>
    </ligand>
</feature>
<feature type="binding site" evidence="2">
    <location>
        <position position="220"/>
    </location>
    <ligand>
        <name>D-ribose 5-phosphate</name>
        <dbReference type="ChEBI" id="CHEBI:78346"/>
    </ligand>
</feature>
<feature type="binding site" evidence="2">
    <location>
        <begin position="224"/>
        <end position="228"/>
    </location>
    <ligand>
        <name>D-ribose 5-phosphate</name>
        <dbReference type="ChEBI" id="CHEBI:78346"/>
    </ligand>
</feature>
<proteinExistence type="inferred from homology"/>
<sequence length="315" mass="34218">MPDMKLFAGNATPELAQRIANRLYTSLGDAAVGRFSDGEVSVQINENVRGGDIFIIQSTCAPTNDNLMELVVMVDALRRASAGRITAVIPYFGYARQDRRVRSARVPITAKVVADFLSSVGVDRVLTVDLHAEQIQGFFDVPVDNVFGSPILLEDMLQLNLDNPIVVSPDIGGVVRARAIAKLLNDTDMAIIDKRRPRANVSQVMHIIGDVAGRDCVLVDDMIDTGGTLCKAAEALKERGAKRVFAYATHPIFSGNAANNLRNSVIDEVVVCDTIPLSDEIKSLPNVRTLTLSGMLAEAIRRISNEESISAMFEH</sequence>
<keyword id="KW-0067">ATP-binding</keyword>
<keyword id="KW-0963">Cytoplasm</keyword>
<keyword id="KW-0418">Kinase</keyword>
<keyword id="KW-0460">Magnesium</keyword>
<keyword id="KW-0479">Metal-binding</keyword>
<keyword id="KW-0545">Nucleotide biosynthesis</keyword>
<keyword id="KW-0547">Nucleotide-binding</keyword>
<keyword id="KW-1185">Reference proteome</keyword>
<keyword id="KW-0808">Transferase</keyword>
<evidence type="ECO:0000250" key="1">
    <source>
        <dbReference type="UniProtKB" id="P0A717"/>
    </source>
</evidence>
<evidence type="ECO:0000255" key="2">
    <source>
        <dbReference type="HAMAP-Rule" id="MF_00583"/>
    </source>
</evidence>
<evidence type="ECO:0000305" key="3"/>
<protein>
    <recommendedName>
        <fullName evidence="2">Ribose-phosphate pyrophosphokinase</fullName>
        <shortName evidence="2">RPPK</shortName>
        <ecNumber evidence="2">2.7.6.1</ecNumber>
    </recommendedName>
    <alternativeName>
        <fullName evidence="2">5-phospho-D-ribosyl alpha-1-diphosphate synthase</fullName>
    </alternativeName>
    <alternativeName>
        <fullName evidence="2">Phosphoribosyl diphosphate synthase</fullName>
    </alternativeName>
    <alternativeName>
        <fullName evidence="2">Phosphoribosyl pyrophosphate synthase</fullName>
        <shortName evidence="2">P-Rib-PP synthase</shortName>
        <shortName evidence="2">PRPP synthase</shortName>
        <shortName evidence="2">PRPPase</shortName>
    </alternativeName>
</protein>
<dbReference type="EC" id="2.7.6.1" evidence="2"/>
<dbReference type="EMBL" id="AE014075">
    <property type="protein sequence ID" value="AAN80130.1"/>
    <property type="status" value="ALT_INIT"/>
    <property type="molecule type" value="Genomic_DNA"/>
</dbReference>
<dbReference type="RefSeq" id="WP_001298109.1">
    <property type="nucleotide sequence ID" value="NZ_CP051263.1"/>
</dbReference>
<dbReference type="SMR" id="P0A718"/>
<dbReference type="STRING" id="199310.c1665"/>
<dbReference type="GeneID" id="93775272"/>
<dbReference type="KEGG" id="ecc:c1665"/>
<dbReference type="eggNOG" id="COG0462">
    <property type="taxonomic scope" value="Bacteria"/>
</dbReference>
<dbReference type="HOGENOM" id="CLU_033546_2_0_6"/>
<dbReference type="UniPathway" id="UPA00087">
    <property type="reaction ID" value="UER00172"/>
</dbReference>
<dbReference type="Proteomes" id="UP000001410">
    <property type="component" value="Chromosome"/>
</dbReference>
<dbReference type="GO" id="GO:0005737">
    <property type="term" value="C:cytoplasm"/>
    <property type="evidence" value="ECO:0007669"/>
    <property type="project" value="UniProtKB-SubCell"/>
</dbReference>
<dbReference type="GO" id="GO:0002189">
    <property type="term" value="C:ribose phosphate diphosphokinase complex"/>
    <property type="evidence" value="ECO:0007669"/>
    <property type="project" value="TreeGrafter"/>
</dbReference>
<dbReference type="GO" id="GO:0005524">
    <property type="term" value="F:ATP binding"/>
    <property type="evidence" value="ECO:0007669"/>
    <property type="project" value="UniProtKB-KW"/>
</dbReference>
<dbReference type="GO" id="GO:0016301">
    <property type="term" value="F:kinase activity"/>
    <property type="evidence" value="ECO:0007669"/>
    <property type="project" value="UniProtKB-KW"/>
</dbReference>
<dbReference type="GO" id="GO:0000287">
    <property type="term" value="F:magnesium ion binding"/>
    <property type="evidence" value="ECO:0007669"/>
    <property type="project" value="UniProtKB-UniRule"/>
</dbReference>
<dbReference type="GO" id="GO:0004749">
    <property type="term" value="F:ribose phosphate diphosphokinase activity"/>
    <property type="evidence" value="ECO:0007669"/>
    <property type="project" value="UniProtKB-UniRule"/>
</dbReference>
<dbReference type="GO" id="GO:0006015">
    <property type="term" value="P:5-phosphoribose 1-diphosphate biosynthetic process"/>
    <property type="evidence" value="ECO:0007669"/>
    <property type="project" value="UniProtKB-UniRule"/>
</dbReference>
<dbReference type="GO" id="GO:0006164">
    <property type="term" value="P:purine nucleotide biosynthetic process"/>
    <property type="evidence" value="ECO:0007669"/>
    <property type="project" value="TreeGrafter"/>
</dbReference>
<dbReference type="GO" id="GO:0009156">
    <property type="term" value="P:ribonucleoside monophosphate biosynthetic process"/>
    <property type="evidence" value="ECO:0007669"/>
    <property type="project" value="InterPro"/>
</dbReference>
<dbReference type="CDD" id="cd06223">
    <property type="entry name" value="PRTases_typeI"/>
    <property type="match status" value="1"/>
</dbReference>
<dbReference type="FunFam" id="3.40.50.2020:FF:000001">
    <property type="entry name" value="Ribose-phosphate pyrophosphokinase"/>
    <property type="match status" value="1"/>
</dbReference>
<dbReference type="FunFam" id="3.40.50.2020:FF:000005">
    <property type="entry name" value="Ribose-phosphate pyrophosphokinase 1"/>
    <property type="match status" value="1"/>
</dbReference>
<dbReference type="Gene3D" id="3.40.50.2020">
    <property type="match status" value="2"/>
</dbReference>
<dbReference type="HAMAP" id="MF_00583_B">
    <property type="entry name" value="RibP_PPkinase_B"/>
    <property type="match status" value="1"/>
</dbReference>
<dbReference type="InterPro" id="IPR000842">
    <property type="entry name" value="PRib_PP_synth_CS"/>
</dbReference>
<dbReference type="InterPro" id="IPR029099">
    <property type="entry name" value="Pribosyltran_N"/>
</dbReference>
<dbReference type="InterPro" id="IPR000836">
    <property type="entry name" value="PRibTrfase_dom"/>
</dbReference>
<dbReference type="InterPro" id="IPR029057">
    <property type="entry name" value="PRTase-like"/>
</dbReference>
<dbReference type="InterPro" id="IPR005946">
    <property type="entry name" value="Rib-P_diPkinase"/>
</dbReference>
<dbReference type="InterPro" id="IPR037515">
    <property type="entry name" value="Rib-P_diPkinase_bac"/>
</dbReference>
<dbReference type="NCBIfam" id="NF002320">
    <property type="entry name" value="PRK01259.1"/>
    <property type="match status" value="1"/>
</dbReference>
<dbReference type="NCBIfam" id="TIGR01251">
    <property type="entry name" value="ribP_PPkin"/>
    <property type="match status" value="1"/>
</dbReference>
<dbReference type="PANTHER" id="PTHR10210">
    <property type="entry name" value="RIBOSE-PHOSPHATE DIPHOSPHOKINASE FAMILY MEMBER"/>
    <property type="match status" value="1"/>
</dbReference>
<dbReference type="PANTHER" id="PTHR10210:SF41">
    <property type="entry name" value="RIBOSE-PHOSPHATE PYROPHOSPHOKINASE 1, CHLOROPLASTIC"/>
    <property type="match status" value="1"/>
</dbReference>
<dbReference type="Pfam" id="PF14572">
    <property type="entry name" value="Pribosyl_synth"/>
    <property type="match status" value="1"/>
</dbReference>
<dbReference type="Pfam" id="PF13793">
    <property type="entry name" value="Pribosyltran_N"/>
    <property type="match status" value="1"/>
</dbReference>
<dbReference type="SMART" id="SM01400">
    <property type="entry name" value="Pribosyltran_N"/>
    <property type="match status" value="1"/>
</dbReference>
<dbReference type="SUPFAM" id="SSF53271">
    <property type="entry name" value="PRTase-like"/>
    <property type="match status" value="1"/>
</dbReference>
<dbReference type="PROSITE" id="PS00114">
    <property type="entry name" value="PRPP_SYNTHASE"/>
    <property type="match status" value="1"/>
</dbReference>
<name>KPRS_ECOL6</name>
<gene>
    <name evidence="2" type="primary">prs</name>
    <name type="synonym">prsA</name>
    <name type="ordered locus">c1665</name>
</gene>
<reference key="1">
    <citation type="journal article" date="2002" name="Proc. Natl. Acad. Sci. U.S.A.">
        <title>Extensive mosaic structure revealed by the complete genome sequence of uropathogenic Escherichia coli.</title>
        <authorList>
            <person name="Welch R.A."/>
            <person name="Burland V."/>
            <person name="Plunkett G. III"/>
            <person name="Redford P."/>
            <person name="Roesch P."/>
            <person name="Rasko D."/>
            <person name="Buckles E.L."/>
            <person name="Liou S.-R."/>
            <person name="Boutin A."/>
            <person name="Hackett J."/>
            <person name="Stroud D."/>
            <person name="Mayhew G.F."/>
            <person name="Rose D.J."/>
            <person name="Zhou S."/>
            <person name="Schwartz D.C."/>
            <person name="Perna N.T."/>
            <person name="Mobley H.L.T."/>
            <person name="Donnenberg M.S."/>
            <person name="Blattner F.R."/>
        </authorList>
    </citation>
    <scope>NUCLEOTIDE SEQUENCE [LARGE SCALE GENOMIC DNA]</scope>
    <source>
        <strain>CFT073 / ATCC 700928 / UPEC</strain>
    </source>
</reference>